<accession>P04385</accession>
<accession>D6VQ22</accession>
<reference key="1">
    <citation type="journal article" date="1984" name="J. Bacteriol.">
        <title>Sequence of the Saccharomyces GAL region and its transcription in vivo.</title>
        <authorList>
            <person name="Citron B.A."/>
            <person name="Donelson J.E."/>
        </authorList>
    </citation>
    <scope>NUCLEOTIDE SEQUENCE [GENOMIC DNA]</scope>
    <source>
        <strain>Carlsbergensis</strain>
    </source>
</reference>
<reference key="2">
    <citation type="journal article" date="1994" name="Yeast">
        <title>The complete sequence of a 33 kb fragment on the right arm of chromosome II from Saccharomyces cerevisiae reveals 16 open reading frames, including ten new open reading frames, five previously identified genes and a homologue of the SCO1 gene.</title>
        <authorList>
            <person name="Smits P.H.M."/>
            <person name="de Haan M."/>
            <person name="Maat C."/>
            <person name="Grivell L.A."/>
        </authorList>
    </citation>
    <scope>NUCLEOTIDE SEQUENCE [GENOMIC DNA]</scope>
    <source>
        <strain>ATCC 204508 / S288c</strain>
    </source>
</reference>
<reference key="3">
    <citation type="journal article" date="1994" name="EMBO J.">
        <title>Complete DNA sequence of yeast chromosome II.</title>
        <authorList>
            <person name="Feldmann H."/>
            <person name="Aigle M."/>
            <person name="Aljinovic G."/>
            <person name="Andre B."/>
            <person name="Baclet M.C."/>
            <person name="Barthe C."/>
            <person name="Baur A."/>
            <person name="Becam A.-M."/>
            <person name="Biteau N."/>
            <person name="Boles E."/>
            <person name="Brandt T."/>
            <person name="Brendel M."/>
            <person name="Brueckner M."/>
            <person name="Bussereau F."/>
            <person name="Christiansen C."/>
            <person name="Contreras R."/>
            <person name="Crouzet M."/>
            <person name="Cziepluch C."/>
            <person name="Demolis N."/>
            <person name="Delaveau T."/>
            <person name="Doignon F."/>
            <person name="Domdey H."/>
            <person name="Duesterhus S."/>
            <person name="Dubois E."/>
            <person name="Dujon B."/>
            <person name="El Bakkoury M."/>
            <person name="Entian K.-D."/>
            <person name="Feuermann M."/>
            <person name="Fiers W."/>
            <person name="Fobo G.M."/>
            <person name="Fritz C."/>
            <person name="Gassenhuber J."/>
            <person name="Glansdorff N."/>
            <person name="Goffeau A."/>
            <person name="Grivell L.A."/>
            <person name="de Haan M."/>
            <person name="Hein C."/>
            <person name="Herbert C.J."/>
            <person name="Hollenberg C.P."/>
            <person name="Holmstroem K."/>
            <person name="Jacq C."/>
            <person name="Jacquet M."/>
            <person name="Jauniaux J.-C."/>
            <person name="Jonniaux J.-L."/>
            <person name="Kallesoee T."/>
            <person name="Kiesau P."/>
            <person name="Kirchrath L."/>
            <person name="Koetter P."/>
            <person name="Korol S."/>
            <person name="Liebl S."/>
            <person name="Logghe M."/>
            <person name="Lohan A.J.E."/>
            <person name="Louis E.J."/>
            <person name="Li Z.Y."/>
            <person name="Maat M.J."/>
            <person name="Mallet L."/>
            <person name="Mannhaupt G."/>
            <person name="Messenguy F."/>
            <person name="Miosga T."/>
            <person name="Molemans F."/>
            <person name="Mueller S."/>
            <person name="Nasr F."/>
            <person name="Obermaier B."/>
            <person name="Perea J."/>
            <person name="Pierard A."/>
            <person name="Piravandi E."/>
            <person name="Pohl F.M."/>
            <person name="Pohl T.M."/>
            <person name="Potier S."/>
            <person name="Proft M."/>
            <person name="Purnelle B."/>
            <person name="Ramezani Rad M."/>
            <person name="Rieger M."/>
            <person name="Rose M."/>
            <person name="Schaaff-Gerstenschlaeger I."/>
            <person name="Scherens B."/>
            <person name="Schwarzlose C."/>
            <person name="Skala J."/>
            <person name="Slonimski P.P."/>
            <person name="Smits P.H.M."/>
            <person name="Souciet J.-L."/>
            <person name="Steensma H.Y."/>
            <person name="Stucka R."/>
            <person name="Urrestarazu L.A."/>
            <person name="van der Aart Q.J.M."/>
            <person name="Van Dyck L."/>
            <person name="Vassarotti A."/>
            <person name="Vetter I."/>
            <person name="Vierendeels F."/>
            <person name="Vissers S."/>
            <person name="Wagner G."/>
            <person name="de Wergifosse P."/>
            <person name="Wolfe K.H."/>
            <person name="Zagulski M."/>
            <person name="Zimmermann F.K."/>
            <person name="Mewes H.-W."/>
            <person name="Kleine K."/>
        </authorList>
    </citation>
    <scope>NUCLEOTIDE SEQUENCE [LARGE SCALE GENOMIC DNA]</scope>
    <source>
        <strain>ATCC 204508 / S288c</strain>
    </source>
</reference>
<reference key="4">
    <citation type="journal article" date="2014" name="G3 (Bethesda)">
        <title>The reference genome sequence of Saccharomyces cerevisiae: Then and now.</title>
        <authorList>
            <person name="Engel S.R."/>
            <person name="Dietrich F.S."/>
            <person name="Fisk D.G."/>
            <person name="Binkley G."/>
            <person name="Balakrishnan R."/>
            <person name="Costanzo M.C."/>
            <person name="Dwight S.S."/>
            <person name="Hitz B.C."/>
            <person name="Karra K."/>
            <person name="Nash R.S."/>
            <person name="Weng S."/>
            <person name="Wong E.D."/>
            <person name="Lloyd P."/>
            <person name="Skrzypek M.S."/>
            <person name="Miyasato S.R."/>
            <person name="Simison M."/>
            <person name="Cherry J.M."/>
        </authorList>
    </citation>
    <scope>GENOME REANNOTATION</scope>
    <source>
        <strain>ATCC 204508 / S288c</strain>
    </source>
</reference>
<reference key="5">
    <citation type="journal article" date="1984" name="Mol. Cell. Biol.">
        <title>Sequences that regulate the divergent GAL1-GAL10 promoter in Saccharomyces cerevisiae.</title>
        <authorList>
            <person name="Johnston M."/>
            <person name="Davis R.W."/>
        </authorList>
    </citation>
    <scope>NUCLEOTIDE SEQUENCE [GENOMIC DNA] OF 1-29</scope>
</reference>
<reference key="6">
    <citation type="journal article" date="1977" name="FEBS Lett.">
        <title>The NH2-terminal sequences of galactokinase from Escherichia coli and Saccharomyces cerevisiae.</title>
        <authorList>
            <person name="Schlesinger D.H."/>
            <person name="Schell M.A."/>
            <person name="Wilson D.B."/>
        </authorList>
    </citation>
    <scope>PROTEIN SEQUENCE OF 2-12</scope>
</reference>
<reference key="7">
    <citation type="journal article" date="1958" name="Science">
        <title>Induction of enzymes of the galactose pathway in mutants of Saccharomyces cerevisiae.</title>
        <authorList>
            <person name="de Robichon-Szulmajster H."/>
        </authorList>
    </citation>
    <scope>FUNCTION</scope>
    <scope>CATALYTIC ACTIVITY</scope>
    <scope>PATHWAY</scope>
</reference>
<reference key="8">
    <citation type="journal article" date="1977" name="J. Biol. Chem.">
        <title>Purification and properties of galactokinase from Saccharomyces cerevisiae.</title>
        <authorList>
            <person name="Schell M.A."/>
            <person name="Wilson D.B."/>
        </authorList>
    </citation>
    <scope>FUNCTION</scope>
    <scope>CATALYTIC ACTIVITY</scope>
    <scope>BIOPHYSICOCHEMICAL PROPERTIES</scope>
    <scope>PATHWAY</scope>
</reference>
<reference key="9">
    <citation type="journal article" date="1985" name="Cell">
        <title>Specific DNA binding of GAL4, a positive regulatory protein of yeast.</title>
        <authorList>
            <person name="Giniger E."/>
            <person name="Varnum S.M."/>
            <person name="Ptashne M."/>
        </authorList>
    </citation>
    <scope>INDUCTION</scope>
</reference>
<reference key="10">
    <citation type="journal article" date="1989" name="J. Bacteriol.">
        <title>Characteristics of galactose transport in Saccharomyces cerevisiae cells and reconstituted lipid vesicles.</title>
        <authorList>
            <person name="Ramos J."/>
            <person name="Szkutnicka K."/>
            <person name="Cirillo V.P."/>
        </authorList>
    </citation>
    <scope>FUNCTION</scope>
</reference>
<reference key="11">
    <citation type="journal article" date="1992" name="Mol. Cell. Biol.">
        <title>Overproduction of the GAL1 or GAL3 protein causes galactose-independent activation of the GAL4 protein: evidence for a new model of induction for the yeast GAL/MEL regulon.</title>
        <authorList>
            <person name="Bhat P.J."/>
            <person name="Hopper J.E."/>
        </authorList>
    </citation>
    <scope>FUNCTION</scope>
</reference>
<reference key="12">
    <citation type="journal article" date="2002" name="Biochimie">
        <title>Kinetic analysis of yeast galactokinase: implications for transcriptional activation of the GAL genes.</title>
        <authorList>
            <person name="Timson D.J."/>
            <person name="Reece R.J."/>
        </authorList>
    </citation>
    <scope>FUNCTION</scope>
    <scope>CATALYTIC ACTIVITY</scope>
    <scope>BIOPHYSICOCHEMICAL PROPERTIES</scope>
    <scope>PATHWAY</scope>
</reference>
<reference key="13">
    <citation type="journal article" date="2009" name="Science">
        <title>Global analysis of Cdk1 substrate phosphorylation sites provides insights into evolution.</title>
        <authorList>
            <person name="Holt L.J."/>
            <person name="Tuch B.B."/>
            <person name="Villen J."/>
            <person name="Johnson A.D."/>
            <person name="Gygi S.P."/>
            <person name="Morgan D.O."/>
        </authorList>
    </citation>
    <scope>PHOSPHORYLATION [LARGE SCALE ANALYSIS] AT SER-381</scope>
    <scope>IDENTIFICATION BY MASS SPECTROMETRY [LARGE SCALE ANALYSIS]</scope>
</reference>
<reference key="14">
    <citation type="journal article" date="2012" name="Proc. Natl. Acad. Sci. U.S.A.">
        <title>N-terminal acetylome analyses and functional insights of the N-terminal acetyltransferase NatB.</title>
        <authorList>
            <person name="Van Damme P."/>
            <person name="Lasa M."/>
            <person name="Polevoda B."/>
            <person name="Gazquez C."/>
            <person name="Elosegui-Artola A."/>
            <person name="Kim D.S."/>
            <person name="De Juan-Pardo E."/>
            <person name="Demeyer K."/>
            <person name="Hole K."/>
            <person name="Larrea E."/>
            <person name="Timmerman E."/>
            <person name="Prieto J."/>
            <person name="Arnesen T."/>
            <person name="Sherman F."/>
            <person name="Gevaert K."/>
            <person name="Aldabe R."/>
        </authorList>
    </citation>
    <scope>IDENTIFICATION BY MASS SPECTROMETRY [LARGE SCALE ANALYSIS]</scope>
</reference>
<reference evidence="13" key="15">
    <citation type="journal article" date="2005" name="J. Biol. Chem.">
        <title>Molecular structure of Saccharomyces cerevisiae Gal1p, a bifunctional galactokinase and transcriptional inducer.</title>
        <authorList>
            <person name="Thoden J.B."/>
            <person name="Sellick C.A."/>
            <person name="Timson D.J."/>
            <person name="Reece R.J."/>
            <person name="Holden H.M."/>
        </authorList>
    </citation>
    <scope>X-RAY CRYSTALLOGRAPHY (2.40 ANGSTROMS) OF 2-528 IN COMPLEX WITH ATP AND ALPHA-D-GALACTOSE</scope>
</reference>
<proteinExistence type="evidence at protein level"/>
<comment type="function">
    <text evidence="2 3 4 5 8">Galactokinase is a key enzyme in the galactose metabolism where it catalyzes the conversion of alpha-D-galactose to galactose 1-phosphate (PubMed:12106903, PubMed:13495476, PubMed:14144). Can also induce the transcription of the yeast GAL genes in response to the organism being challenged with galactose as the sole source of carbon (PubMed:1317007, PubMed:2656659). It's striking amino acid sequence similarity to GAL3 might explain its GAL3-like induction activity (PubMed:1317007, PubMed:2656659).</text>
</comment>
<comment type="catalytic activity">
    <reaction evidence="2 4 5">
        <text>alpha-D-galactose + ATP = alpha-D-galactose 1-phosphate + ADP + H(+)</text>
        <dbReference type="Rhea" id="RHEA:13553"/>
        <dbReference type="ChEBI" id="CHEBI:15378"/>
        <dbReference type="ChEBI" id="CHEBI:28061"/>
        <dbReference type="ChEBI" id="CHEBI:30616"/>
        <dbReference type="ChEBI" id="CHEBI:58336"/>
        <dbReference type="ChEBI" id="CHEBI:456216"/>
        <dbReference type="EC" id="2.7.1.6"/>
    </reaction>
    <physiologicalReaction direction="left-to-right" evidence="2 4 5">
        <dbReference type="Rhea" id="RHEA:13554"/>
    </physiologicalReaction>
</comment>
<comment type="biophysicochemical properties">
    <kinetics>
        <KM evidence="2 5">1200 uM for alpha-D-galactose</KM>
        <KM evidence="2">32 uM for ATP</KM>
        <text evidence="2">kcat is 11.7 sec(-1) for alpha-D-galactose and 8.7 sec(-1) for ATP utilization.</text>
    </kinetics>
    <phDependence>
        <text evidence="5">Optimum pH is 8.0-9.0.</text>
    </phDependence>
</comment>
<comment type="pathway">
    <text evidence="2 4 5">Carbohydrate metabolism; galactose metabolism.</text>
</comment>
<comment type="interaction">
    <interactant intactId="EBI-7272">
        <id>P04385</id>
    </interactant>
    <interactant intactId="EBI-2061197">
        <id>P04387</id>
        <label>GAL80</label>
    </interactant>
    <organismsDiffer>false</organismsDiffer>
    <experiments>2</experiments>
</comment>
<comment type="induction">
    <text evidence="9">Expression is regulated by the GAL4 transcription factor.</text>
</comment>
<comment type="similarity">
    <text evidence="12">Belongs to the GHMP kinase family. GalK subfamily.</text>
</comment>
<name>GAL1_YEAST</name>
<dbReference type="EC" id="2.7.1.6" evidence="2 4 5"/>
<dbReference type="EMBL" id="AH001375">
    <property type="protein sequence ID" value="AAA34631.1"/>
    <property type="molecule type" value="Genomic_DNA"/>
</dbReference>
<dbReference type="EMBL" id="X76078">
    <property type="protein sequence ID" value="CAA53677.1"/>
    <property type="molecule type" value="Genomic_DNA"/>
</dbReference>
<dbReference type="EMBL" id="Z35889">
    <property type="protein sequence ID" value="CAA84962.1"/>
    <property type="molecule type" value="Genomic_DNA"/>
</dbReference>
<dbReference type="EMBL" id="K02115">
    <property type="protein sequence ID" value="AAA34621.1"/>
    <property type="molecule type" value="Genomic_DNA"/>
</dbReference>
<dbReference type="EMBL" id="BK006936">
    <property type="protein sequence ID" value="DAA07142.1"/>
    <property type="molecule type" value="Genomic_DNA"/>
</dbReference>
<dbReference type="PIR" id="S45876">
    <property type="entry name" value="KIBYGG"/>
</dbReference>
<dbReference type="RefSeq" id="NP_009576.1">
    <property type="nucleotide sequence ID" value="NM_001178368.1"/>
</dbReference>
<dbReference type="PDB" id="2AJ4">
    <property type="method" value="X-ray"/>
    <property type="resolution" value="2.40 A"/>
    <property type="chains" value="A/B=2-528"/>
</dbReference>
<dbReference type="PDBsum" id="2AJ4"/>
<dbReference type="SMR" id="P04385"/>
<dbReference type="BioGRID" id="32723">
    <property type="interactions" value="92"/>
</dbReference>
<dbReference type="ComplexPortal" id="CPX-1043">
    <property type="entry name" value="GAL1-GAL80 transcription regulation complex"/>
</dbReference>
<dbReference type="DIP" id="DIP-2333N"/>
<dbReference type="FunCoup" id="P04385">
    <property type="interactions" value="1166"/>
</dbReference>
<dbReference type="IntAct" id="P04385">
    <property type="interactions" value="99"/>
</dbReference>
<dbReference type="STRING" id="4932.YBR020W"/>
<dbReference type="iPTMnet" id="P04385"/>
<dbReference type="PaxDb" id="4932-YBR020W"/>
<dbReference type="PeptideAtlas" id="P04385"/>
<dbReference type="EnsemblFungi" id="YBR020W_mRNA">
    <property type="protein sequence ID" value="YBR020W"/>
    <property type="gene ID" value="YBR020W"/>
</dbReference>
<dbReference type="GeneID" id="852308"/>
<dbReference type="KEGG" id="sce:YBR020W"/>
<dbReference type="AGR" id="SGD:S000000224"/>
<dbReference type="SGD" id="S000000224">
    <property type="gene designation" value="GAL1"/>
</dbReference>
<dbReference type="VEuPathDB" id="FungiDB:YBR020W"/>
<dbReference type="eggNOG" id="KOG0631">
    <property type="taxonomic scope" value="Eukaryota"/>
</dbReference>
<dbReference type="GeneTree" id="ENSGT00950000183187"/>
<dbReference type="HOGENOM" id="CLU_017814_6_2_1"/>
<dbReference type="InParanoid" id="P04385"/>
<dbReference type="OMA" id="GFHDTYF"/>
<dbReference type="OrthoDB" id="187738at2759"/>
<dbReference type="BioCyc" id="YEAST:YBR020W-MONOMER"/>
<dbReference type="UniPathway" id="UPA00214"/>
<dbReference type="BioGRID-ORCS" id="852308">
    <property type="hits" value="1 hit in 10 CRISPR screens"/>
</dbReference>
<dbReference type="EvolutionaryTrace" id="P04385"/>
<dbReference type="PRO" id="PR:P04385"/>
<dbReference type="Proteomes" id="UP000002311">
    <property type="component" value="Chromosome II"/>
</dbReference>
<dbReference type="RNAct" id="P04385">
    <property type="molecule type" value="protein"/>
</dbReference>
<dbReference type="GO" id="GO:0005737">
    <property type="term" value="C:cytoplasm"/>
    <property type="evidence" value="ECO:0000316"/>
    <property type="project" value="SGD"/>
</dbReference>
<dbReference type="GO" id="GO:0005829">
    <property type="term" value="C:cytosol"/>
    <property type="evidence" value="ECO:0000318"/>
    <property type="project" value="GO_Central"/>
</dbReference>
<dbReference type="GO" id="GO:0005634">
    <property type="term" value="C:nucleus"/>
    <property type="evidence" value="ECO:0000250"/>
    <property type="project" value="ComplexPortal"/>
</dbReference>
<dbReference type="GO" id="GO:0005667">
    <property type="term" value="C:transcription regulator complex"/>
    <property type="evidence" value="ECO:0000353"/>
    <property type="project" value="ComplexPortal"/>
</dbReference>
<dbReference type="GO" id="GO:0005524">
    <property type="term" value="F:ATP binding"/>
    <property type="evidence" value="ECO:0007669"/>
    <property type="project" value="UniProtKB-KW"/>
</dbReference>
<dbReference type="GO" id="GO:0004335">
    <property type="term" value="F:galactokinase activity"/>
    <property type="evidence" value="ECO:0000314"/>
    <property type="project" value="SGD"/>
</dbReference>
<dbReference type="GO" id="GO:0046835">
    <property type="term" value="P:carbohydrate phosphorylation"/>
    <property type="evidence" value="ECO:0000314"/>
    <property type="project" value="SGD"/>
</dbReference>
<dbReference type="GO" id="GO:0033499">
    <property type="term" value="P:galactose catabolic process via UDP-galactose, Leloir pathway"/>
    <property type="evidence" value="ECO:0000314"/>
    <property type="project" value="SGD"/>
</dbReference>
<dbReference type="GO" id="GO:0006012">
    <property type="term" value="P:galactose metabolic process"/>
    <property type="evidence" value="ECO:0000318"/>
    <property type="project" value="GO_Central"/>
</dbReference>
<dbReference type="GO" id="GO:0000411">
    <property type="term" value="P:positive regulation of transcription by galactose"/>
    <property type="evidence" value="ECO:0000316"/>
    <property type="project" value="SGD"/>
</dbReference>
<dbReference type="GO" id="GO:0000435">
    <property type="term" value="P:positive regulation of transcription from RNA polymerase II promoter by galactose"/>
    <property type="evidence" value="ECO:0000303"/>
    <property type="project" value="ComplexPortal"/>
</dbReference>
<dbReference type="FunFam" id="1.20.1440.340:FF:000003">
    <property type="entry name" value="GAL1p Galactokinase"/>
    <property type="match status" value="1"/>
</dbReference>
<dbReference type="FunFam" id="3.30.230.10:FF:000056">
    <property type="entry name" value="GAL1p Galactokinase"/>
    <property type="match status" value="1"/>
</dbReference>
<dbReference type="Gene3D" id="1.20.1440.340">
    <property type="match status" value="1"/>
</dbReference>
<dbReference type="Gene3D" id="3.30.230.10">
    <property type="match status" value="1"/>
</dbReference>
<dbReference type="InterPro" id="IPR000705">
    <property type="entry name" value="Galactokinase"/>
</dbReference>
<dbReference type="InterPro" id="IPR019741">
    <property type="entry name" value="Galactokinase_CS"/>
</dbReference>
<dbReference type="InterPro" id="IPR019539">
    <property type="entry name" value="GalKase_N"/>
</dbReference>
<dbReference type="InterPro" id="IPR013750">
    <property type="entry name" value="GHMP_kinase_C_dom"/>
</dbReference>
<dbReference type="InterPro" id="IPR036554">
    <property type="entry name" value="GHMP_kinase_C_sf"/>
</dbReference>
<dbReference type="InterPro" id="IPR006204">
    <property type="entry name" value="GHMP_kinase_N_dom"/>
</dbReference>
<dbReference type="InterPro" id="IPR006203">
    <property type="entry name" value="GHMP_knse_ATP-bd_CS"/>
</dbReference>
<dbReference type="InterPro" id="IPR006206">
    <property type="entry name" value="Mevalonate/galactokinase"/>
</dbReference>
<dbReference type="InterPro" id="IPR020568">
    <property type="entry name" value="Ribosomal_Su5_D2-typ_SF"/>
</dbReference>
<dbReference type="InterPro" id="IPR014721">
    <property type="entry name" value="Ribsml_uS5_D2-typ_fold_subgr"/>
</dbReference>
<dbReference type="NCBIfam" id="TIGR00131">
    <property type="entry name" value="gal_kin"/>
    <property type="match status" value="1"/>
</dbReference>
<dbReference type="PANTHER" id="PTHR10457:SF7">
    <property type="entry name" value="GALACTOKINASE-RELATED"/>
    <property type="match status" value="1"/>
</dbReference>
<dbReference type="PANTHER" id="PTHR10457">
    <property type="entry name" value="MEVALONATE KINASE/GALACTOKINASE"/>
    <property type="match status" value="1"/>
</dbReference>
<dbReference type="Pfam" id="PF10509">
    <property type="entry name" value="GalKase_gal_bdg"/>
    <property type="match status" value="1"/>
</dbReference>
<dbReference type="Pfam" id="PF08544">
    <property type="entry name" value="GHMP_kinases_C"/>
    <property type="match status" value="1"/>
</dbReference>
<dbReference type="Pfam" id="PF00288">
    <property type="entry name" value="GHMP_kinases_N"/>
    <property type="match status" value="1"/>
</dbReference>
<dbReference type="PIRSF" id="PIRSF000530">
    <property type="entry name" value="Galactokinase"/>
    <property type="match status" value="1"/>
</dbReference>
<dbReference type="PRINTS" id="PR00473">
    <property type="entry name" value="GALCTOKINASE"/>
</dbReference>
<dbReference type="PRINTS" id="PR00959">
    <property type="entry name" value="MEVGALKINASE"/>
</dbReference>
<dbReference type="SUPFAM" id="SSF55060">
    <property type="entry name" value="GHMP Kinase, C-terminal domain"/>
    <property type="match status" value="1"/>
</dbReference>
<dbReference type="SUPFAM" id="SSF54211">
    <property type="entry name" value="Ribosomal protein S5 domain 2-like"/>
    <property type="match status" value="1"/>
</dbReference>
<dbReference type="PROSITE" id="PS00106">
    <property type="entry name" value="GALACTOKINASE"/>
    <property type="match status" value="1"/>
</dbReference>
<dbReference type="PROSITE" id="PS00627">
    <property type="entry name" value="GHMP_KINASES_ATP"/>
    <property type="match status" value="1"/>
</dbReference>
<organism>
    <name type="scientific">Saccharomyces cerevisiae (strain ATCC 204508 / S288c)</name>
    <name type="common">Baker's yeast</name>
    <dbReference type="NCBI Taxonomy" id="559292"/>
    <lineage>
        <taxon>Eukaryota</taxon>
        <taxon>Fungi</taxon>
        <taxon>Dikarya</taxon>
        <taxon>Ascomycota</taxon>
        <taxon>Saccharomycotina</taxon>
        <taxon>Saccharomycetes</taxon>
        <taxon>Saccharomycetales</taxon>
        <taxon>Saccharomycetaceae</taxon>
        <taxon>Saccharomyces</taxon>
    </lineage>
</organism>
<protein>
    <recommendedName>
        <fullName evidence="10">Galactokinase</fullName>
        <ecNumber evidence="2 4 5">2.7.1.6</ecNumber>
    </recommendedName>
    <alternativeName>
        <fullName evidence="10">Galactose kinase</fullName>
    </alternativeName>
</protein>
<gene>
    <name evidence="11" type="primary">GAL1</name>
    <name type="ordered locus">YBR020W</name>
    <name type="ORF">YBR0302</name>
</gene>
<evidence type="ECO:0000250" key="1">
    <source>
        <dbReference type="UniProtKB" id="Q9HHB6"/>
    </source>
</evidence>
<evidence type="ECO:0000269" key="2">
    <source>
    </source>
</evidence>
<evidence type="ECO:0000269" key="3">
    <source>
    </source>
</evidence>
<evidence type="ECO:0000269" key="4">
    <source>
    </source>
</evidence>
<evidence type="ECO:0000269" key="5">
    <source>
    </source>
</evidence>
<evidence type="ECO:0000269" key="6">
    <source>
    </source>
</evidence>
<evidence type="ECO:0000269" key="7">
    <source>
    </source>
</evidence>
<evidence type="ECO:0000269" key="8">
    <source>
    </source>
</evidence>
<evidence type="ECO:0000269" key="9">
    <source>
    </source>
</evidence>
<evidence type="ECO:0000303" key="10">
    <source>
    </source>
</evidence>
<evidence type="ECO:0000303" key="11">
    <source>
    </source>
</evidence>
<evidence type="ECO:0000305" key="12"/>
<evidence type="ECO:0007744" key="13">
    <source>
        <dbReference type="PDB" id="2AJ4"/>
    </source>
</evidence>
<evidence type="ECO:0007744" key="14">
    <source>
    </source>
</evidence>
<evidence type="ECO:0007829" key="15">
    <source>
        <dbReference type="PDB" id="2AJ4"/>
    </source>
</evidence>
<keyword id="KW-0002">3D-structure</keyword>
<keyword id="KW-0067">ATP-binding</keyword>
<keyword id="KW-0119">Carbohydrate metabolism</keyword>
<keyword id="KW-0903">Direct protein sequencing</keyword>
<keyword id="KW-0299">Galactose metabolism</keyword>
<keyword id="KW-0418">Kinase</keyword>
<keyword id="KW-0547">Nucleotide-binding</keyword>
<keyword id="KW-0597">Phosphoprotein</keyword>
<keyword id="KW-1185">Reference proteome</keyword>
<keyword id="KW-0808">Transferase</keyword>
<feature type="initiator methionine" description="Removed" evidence="7">
    <location>
        <position position="1"/>
    </location>
</feature>
<feature type="chain" id="PRO_0000184657" description="Galactokinase">
    <location>
        <begin position="2"/>
        <end position="528"/>
    </location>
</feature>
<feature type="active site" description="Proton acceptor" evidence="1">
    <location>
        <position position="217"/>
    </location>
</feature>
<feature type="binding site" evidence="6 13">
    <location>
        <position position="53"/>
    </location>
    <ligand>
        <name>alpha-D-galactose</name>
        <dbReference type="ChEBI" id="CHEBI:28061"/>
    </ligand>
</feature>
<feature type="binding site" evidence="6 13">
    <location>
        <position position="59"/>
    </location>
    <ligand>
        <name>alpha-D-galactose</name>
        <dbReference type="ChEBI" id="CHEBI:28061"/>
    </ligand>
</feature>
<feature type="binding site" evidence="6 13">
    <location>
        <position position="60"/>
    </location>
    <ligand>
        <name>alpha-D-galactose</name>
        <dbReference type="ChEBI" id="CHEBI:28061"/>
    </ligand>
</feature>
<feature type="binding site" evidence="6 13">
    <location>
        <position position="62"/>
    </location>
    <ligand>
        <name>alpha-D-galactose</name>
        <dbReference type="ChEBI" id="CHEBI:28061"/>
    </ligand>
</feature>
<feature type="binding site" evidence="6 13">
    <location>
        <position position="165"/>
    </location>
    <ligand>
        <name>ATP</name>
        <dbReference type="ChEBI" id="CHEBI:30616"/>
    </ligand>
</feature>
<feature type="binding site" evidence="6 13">
    <location>
        <position position="167"/>
    </location>
    <ligand>
        <name>ATP</name>
        <dbReference type="ChEBI" id="CHEBI:30616"/>
    </ligand>
</feature>
<feature type="binding site" evidence="6 13">
    <location>
        <position position="169"/>
    </location>
    <ligand>
        <name>ATP</name>
        <dbReference type="ChEBI" id="CHEBI:30616"/>
    </ligand>
</feature>
<feature type="binding site" evidence="6 13">
    <location>
        <position position="170"/>
    </location>
    <ligand>
        <name>ATP</name>
        <dbReference type="ChEBI" id="CHEBI:30616"/>
    </ligand>
</feature>
<feature type="binding site" evidence="6 13">
    <location>
        <position position="213"/>
    </location>
    <ligand>
        <name>alpha-D-galactose</name>
        <dbReference type="ChEBI" id="CHEBI:28061"/>
    </ligand>
</feature>
<feature type="binding site" evidence="6 13">
    <location>
        <position position="217"/>
    </location>
    <ligand>
        <name>alpha-D-galactose</name>
        <dbReference type="ChEBI" id="CHEBI:28061"/>
    </ligand>
</feature>
<feature type="binding site" evidence="6 13">
    <location>
        <position position="264"/>
    </location>
    <ligand>
        <name>ATP</name>
        <dbReference type="ChEBI" id="CHEBI:30616"/>
    </ligand>
</feature>
<feature type="binding site" evidence="6 13">
    <location>
        <position position="265"/>
    </location>
    <ligand>
        <name>ATP</name>
        <dbReference type="ChEBI" id="CHEBI:30616"/>
    </ligand>
</feature>
<feature type="binding site" evidence="6 13">
    <location>
        <position position="266"/>
    </location>
    <ligand>
        <name>ATP</name>
        <dbReference type="ChEBI" id="CHEBI:30616"/>
    </ligand>
</feature>
<feature type="binding site" evidence="6 13">
    <location>
        <position position="274"/>
    </location>
    <ligand>
        <name>alpha-D-galactose</name>
        <dbReference type="ChEBI" id="CHEBI:28061"/>
    </ligand>
</feature>
<feature type="site" description="Transition state stabilizer" evidence="1">
    <location>
        <position position="53"/>
    </location>
</feature>
<feature type="modified residue" description="Phosphoserine" evidence="14">
    <location>
        <position position="381"/>
    </location>
</feature>
<feature type="sequence conflict" description="In Ref. 6; AA sequence." evidence="12" ref="6">
    <original>S</original>
    <variation>R</variation>
    <location>
        <position position="6"/>
    </location>
</feature>
<feature type="sequence conflict" description="In Ref. 1; AAA34631." evidence="12" ref="1">
    <original>V</original>
    <variation>I</variation>
    <location>
        <position position="162"/>
    </location>
</feature>
<feature type="sequence conflict" description="In Ref. 1; AAA34631." evidence="12" ref="1">
    <original>EHYVGVNNGGMDQAASVCGEEDHALYVEFKPQLK</original>
    <variation>DIMLVLTMAVWIRLPLFAVRKIMLYTLSSNAVE</variation>
    <location>
        <begin position="206"/>
        <end position="239"/>
    </location>
</feature>
<feature type="sequence conflict" description="In Ref. 1; AAA34631." evidence="12" ref="1">
    <original>L</original>
    <variation>P</variation>
    <location>
        <position position="297"/>
    </location>
</feature>
<feature type="sequence conflict" description="In Ref. 1; AAA34631." evidence="12" ref="1">
    <original>A</original>
    <variation>V</variation>
    <location>
        <position position="428"/>
    </location>
</feature>
<feature type="sequence conflict" description="In Ref. 1; AAA34631." evidence="12" ref="1">
    <original>N</original>
    <variation>NN</variation>
    <location>
        <position position="483"/>
    </location>
</feature>
<feature type="helix" evidence="15">
    <location>
        <begin position="23"/>
        <end position="40"/>
    </location>
</feature>
<feature type="strand" evidence="15">
    <location>
        <begin position="45"/>
        <end position="57"/>
    </location>
</feature>
<feature type="helix" evidence="15">
    <location>
        <begin position="62"/>
        <end position="64"/>
    </location>
</feature>
<feature type="strand" evidence="15">
    <location>
        <begin position="68"/>
        <end position="84"/>
    </location>
</feature>
<feature type="strand" evidence="15">
    <location>
        <begin position="90"/>
        <end position="97"/>
    </location>
</feature>
<feature type="strand" evidence="15">
    <location>
        <begin position="103"/>
        <end position="106"/>
    </location>
</feature>
<feature type="helix" evidence="15">
    <location>
        <begin position="123"/>
        <end position="141"/>
    </location>
</feature>
<feature type="helix" evidence="15">
    <location>
        <begin position="143"/>
        <end position="146"/>
    </location>
</feature>
<feature type="strand" evidence="15">
    <location>
        <begin position="147"/>
        <end position="149"/>
    </location>
</feature>
<feature type="strand" evidence="15">
    <location>
        <begin position="153"/>
        <end position="160"/>
    </location>
</feature>
<feature type="strand" evidence="15">
    <location>
        <begin position="166"/>
        <end position="168"/>
    </location>
</feature>
<feature type="helix" evidence="15">
    <location>
        <begin position="170"/>
        <end position="187"/>
    </location>
</feature>
<feature type="helix" evidence="15">
    <location>
        <begin position="195"/>
        <end position="202"/>
    </location>
</feature>
<feature type="helix" evidence="15">
    <location>
        <begin position="203"/>
        <end position="209"/>
    </location>
</feature>
<feature type="helix" evidence="15">
    <location>
        <begin position="216"/>
        <end position="223"/>
    </location>
</feature>
<feature type="strand" evidence="15">
    <location>
        <begin position="229"/>
        <end position="233"/>
    </location>
</feature>
<feature type="strand" evidence="15">
    <location>
        <begin position="235"/>
        <end position="237"/>
    </location>
</feature>
<feature type="strand" evidence="15">
    <location>
        <begin position="239"/>
        <end position="243"/>
    </location>
</feature>
<feature type="strand" evidence="15">
    <location>
        <begin position="252"/>
        <end position="259"/>
    </location>
</feature>
<feature type="turn" evidence="15">
    <location>
        <begin position="266"/>
        <end position="273"/>
    </location>
</feature>
<feature type="helix" evidence="15">
    <location>
        <begin position="274"/>
        <end position="291"/>
    </location>
</feature>
<feature type="helix" evidence="15">
    <location>
        <begin position="310"/>
        <end position="322"/>
    </location>
</feature>
<feature type="helix" evidence="15">
    <location>
        <begin position="332"/>
        <end position="350"/>
    </location>
</feature>
<feature type="helix" evidence="15">
    <location>
        <begin position="351"/>
        <end position="353"/>
    </location>
</feature>
<feature type="helix" evidence="15">
    <location>
        <begin position="359"/>
        <end position="366"/>
    </location>
</feature>
<feature type="helix" evidence="15">
    <location>
        <begin position="370"/>
        <end position="378"/>
    </location>
</feature>
<feature type="strand" evidence="15">
    <location>
        <begin position="379"/>
        <end position="381"/>
    </location>
</feature>
<feature type="helix" evidence="15">
    <location>
        <begin position="390"/>
        <end position="412"/>
    </location>
</feature>
<feature type="helix" evidence="15">
    <location>
        <begin position="419"/>
        <end position="439"/>
    </location>
</feature>
<feature type="helix" evidence="15">
    <location>
        <begin position="446"/>
        <end position="457"/>
    </location>
</feature>
<feature type="strand" evidence="15">
    <location>
        <begin position="461"/>
        <end position="465"/>
    </location>
</feature>
<feature type="strand" evidence="15">
    <location>
        <begin position="470"/>
        <end position="481"/>
    </location>
</feature>
<feature type="helix" evidence="15">
    <location>
        <begin position="486"/>
        <end position="496"/>
    </location>
</feature>
<feature type="helix" evidence="15">
    <location>
        <begin position="498"/>
        <end position="501"/>
    </location>
</feature>
<feature type="helix" evidence="15">
    <location>
        <begin position="507"/>
        <end position="513"/>
    </location>
</feature>
<feature type="strand" evidence="15">
    <location>
        <begin position="514"/>
        <end position="517"/>
    </location>
</feature>
<feature type="strand" evidence="15">
    <location>
        <begin position="523"/>
        <end position="527"/>
    </location>
</feature>
<sequence length="528" mass="57944">MTKSHSEEVIVPEFNSSAKELPRPLAEKCPSIIKKFISAYDAKPDFVARSPGRVNLIGEHIDYCDFSVLPLAIDFDMLCAVKVLNEKNPSITLINADPKFAQRKFDLPLDGSYVTIDPSVSDWSNYFKCGLHVAHSFLKKLAPERFASAPLAGLQVFCEGDVPTGSGLSSSAAFICAVALAVVKANMGPGYHMSKQNLMRITVVAEHYVGVNNGGMDQAASVCGEEDHALYVEFKPQLKATPFKFPQLKNHEISFVIANTLVVSNKFETAPTNYNLRVVEVTTAANVLAATYGVVLLSGKEGSSTNKGNLRDFMNVYYARYHNISTPWNGDIESGIERLTKMLVLVEESLANKKQGFSVDDVAQSLNCSREEFTRDYLTTSPVRFQVLKLYQRAKHVYSESLRVLKAVKLMTTASFTADEDFFKQFGALMNESQASCDKLYECSCPEIDKICSIALSNGSYGSRLTGAGWGGCTVHLVPGGPNGNIEKVKEALANEFYKVKYPKITDAELENAIIVSKPALGSCLYEL</sequence>